<reference key="1">
    <citation type="journal article" date="2006" name="Gene">
        <title>Adaptive selection of mitochondrial complex I subunits during primate radiation.</title>
        <authorList>
            <person name="Mishmar D."/>
            <person name="Ruiz-Pesini E."/>
            <person name="Mondragon-Palomino M."/>
            <person name="Procaccio V."/>
            <person name="Gaut B."/>
            <person name="Wallace D.C."/>
        </authorList>
    </citation>
    <scope>NUCLEOTIDE SEQUENCE [MRNA]</scope>
</reference>
<feature type="initiator methionine" description="Removed" evidence="2">
    <location>
        <position position="1"/>
    </location>
</feature>
<feature type="chain" id="PRO_0000251807" description="NADH dehydrogenase [ubiquinone] 1 alpha subcomplex subunit 7">
    <location>
        <begin position="2"/>
        <end position="113"/>
    </location>
</feature>
<feature type="region of interest" description="Disordered" evidence="4">
    <location>
        <begin position="31"/>
        <end position="52"/>
    </location>
</feature>
<feature type="region of interest" description="Disordered" evidence="4">
    <location>
        <begin position="86"/>
        <end position="113"/>
    </location>
</feature>
<feature type="modified residue" description="N-acetylalanine" evidence="2">
    <location>
        <position position="2"/>
    </location>
</feature>
<feature type="modified residue" description="N6-acetyllysine" evidence="3">
    <location>
        <position position="40"/>
    </location>
</feature>
<feature type="modified residue" description="Phosphothreonine" evidence="1">
    <location>
        <position position="96"/>
    </location>
</feature>
<protein>
    <recommendedName>
        <fullName>NADH dehydrogenase [ubiquinone] 1 alpha subcomplex subunit 7</fullName>
    </recommendedName>
    <alternativeName>
        <fullName>Complex I-B14.5a</fullName>
        <shortName>CI-B14.5a</shortName>
    </alternativeName>
    <alternativeName>
        <fullName>NADH-ubiquinone oxidoreductase subunit B14.5a</fullName>
    </alternativeName>
</protein>
<evidence type="ECO:0000250" key="1">
    <source>
        <dbReference type="UniProtKB" id="O95182"/>
    </source>
</evidence>
<evidence type="ECO:0000250" key="2">
    <source>
        <dbReference type="UniProtKB" id="Q05752"/>
    </source>
</evidence>
<evidence type="ECO:0000250" key="3">
    <source>
        <dbReference type="UniProtKB" id="Q9Z1P6"/>
    </source>
</evidence>
<evidence type="ECO:0000256" key="4">
    <source>
        <dbReference type="SAM" id="MobiDB-lite"/>
    </source>
</evidence>
<evidence type="ECO:0000305" key="5"/>
<accession>Q0MQA6</accession>
<proteinExistence type="inferred from homology"/>
<name>NDUA7_PONPY</name>
<comment type="function">
    <text evidence="1">Accessory subunit of the mitochondrial membrane respiratory chain NADH dehydrogenase (Complex I), that is believed not to be involved in catalysis. Complex I functions in the transfer of electrons from NADH to the respiratory chain. The immediate electron acceptor for the enzyme is believed to be ubiquinone.</text>
</comment>
<comment type="subunit">
    <text evidence="1">Complex I is composed of 45 different subunits.</text>
</comment>
<comment type="subcellular location">
    <subcellularLocation>
        <location evidence="1">Mitochondrion inner membrane</location>
        <topology evidence="1">Peripheral membrane protein</topology>
        <orientation evidence="1">Matrix side</orientation>
    </subcellularLocation>
</comment>
<comment type="similarity">
    <text evidence="5">Belongs to the complex I NDUFA7 subunit family.</text>
</comment>
<comment type="sequence caution" evidence="5">
    <conflict type="erroneous initiation">
        <sequence resource="EMBL-CDS" id="ABH12237"/>
    </conflict>
</comment>
<organism>
    <name type="scientific">Pongo pygmaeus</name>
    <name type="common">Bornean orangutan</name>
    <dbReference type="NCBI Taxonomy" id="9600"/>
    <lineage>
        <taxon>Eukaryota</taxon>
        <taxon>Metazoa</taxon>
        <taxon>Chordata</taxon>
        <taxon>Craniata</taxon>
        <taxon>Vertebrata</taxon>
        <taxon>Euteleostomi</taxon>
        <taxon>Mammalia</taxon>
        <taxon>Eutheria</taxon>
        <taxon>Euarchontoglires</taxon>
        <taxon>Primates</taxon>
        <taxon>Haplorrhini</taxon>
        <taxon>Catarrhini</taxon>
        <taxon>Hominidae</taxon>
        <taxon>Pongo</taxon>
    </lineage>
</organism>
<sequence length="113" mass="12556">MASATRLIQRLRNWASGQDLQAKLQLRYQEISKRTQPPPKLPVGPSHKLSNNYYCTRDGRRESVPPSIIMSSQKALVSGKPAESSAVAATEKKAVTPAPPIKRWELSSDQPYL</sequence>
<dbReference type="EMBL" id="DQ885728">
    <property type="protein sequence ID" value="ABH12237.1"/>
    <property type="status" value="ALT_INIT"/>
    <property type="molecule type" value="mRNA"/>
</dbReference>
<dbReference type="RefSeq" id="XP_054322399.1">
    <property type="nucleotide sequence ID" value="XM_054466424.1"/>
</dbReference>
<dbReference type="SMR" id="Q0MQA6"/>
<dbReference type="GeneID" id="129021222"/>
<dbReference type="GO" id="GO:0005743">
    <property type="term" value="C:mitochondrial inner membrane"/>
    <property type="evidence" value="ECO:0007669"/>
    <property type="project" value="UniProtKB-SubCell"/>
</dbReference>
<dbReference type="GO" id="GO:0045271">
    <property type="term" value="C:respiratory chain complex I"/>
    <property type="evidence" value="ECO:0000250"/>
    <property type="project" value="UniProtKB"/>
</dbReference>
<dbReference type="GO" id="GO:0006120">
    <property type="term" value="P:mitochondrial electron transport, NADH to ubiquinone"/>
    <property type="evidence" value="ECO:0007669"/>
    <property type="project" value="TreeGrafter"/>
</dbReference>
<dbReference type="InterPro" id="IPR009947">
    <property type="entry name" value="NDUA7"/>
</dbReference>
<dbReference type="PANTHER" id="PTHR12485:SF1">
    <property type="entry name" value="NADH DEHYDROGENASE [UBIQUINONE] 1 ALPHA SUBCOMPLEX SUBUNIT 7"/>
    <property type="match status" value="1"/>
</dbReference>
<dbReference type="PANTHER" id="PTHR12485">
    <property type="entry name" value="NADH-UBIQUINONE OXIDOREDUCTASE SUBUNIT B"/>
    <property type="match status" value="1"/>
</dbReference>
<dbReference type="Pfam" id="PF07347">
    <property type="entry name" value="CI-B14_5a"/>
    <property type="match status" value="1"/>
</dbReference>
<keyword id="KW-0007">Acetylation</keyword>
<keyword id="KW-0249">Electron transport</keyword>
<keyword id="KW-0472">Membrane</keyword>
<keyword id="KW-0496">Mitochondrion</keyword>
<keyword id="KW-0999">Mitochondrion inner membrane</keyword>
<keyword id="KW-0597">Phosphoprotein</keyword>
<keyword id="KW-0679">Respiratory chain</keyword>
<keyword id="KW-0813">Transport</keyword>
<gene>
    <name type="primary">NDUFA7</name>
</gene>